<accession>A3PED0</accession>
<dbReference type="EC" id="4.1.1.48" evidence="1"/>
<dbReference type="EMBL" id="CP000576">
    <property type="protein sequence ID" value="ABO18105.1"/>
    <property type="molecule type" value="Genomic_DNA"/>
</dbReference>
<dbReference type="RefSeq" id="WP_011863412.1">
    <property type="nucleotide sequence ID" value="NC_009091.1"/>
</dbReference>
<dbReference type="SMR" id="A3PED0"/>
<dbReference type="STRING" id="167546.P9301_14821"/>
<dbReference type="KEGG" id="pmg:P9301_14821"/>
<dbReference type="eggNOG" id="COG0134">
    <property type="taxonomic scope" value="Bacteria"/>
</dbReference>
<dbReference type="HOGENOM" id="CLU_034247_2_0_3"/>
<dbReference type="OrthoDB" id="9804217at2"/>
<dbReference type="UniPathway" id="UPA00035">
    <property type="reaction ID" value="UER00043"/>
</dbReference>
<dbReference type="Proteomes" id="UP000001430">
    <property type="component" value="Chromosome"/>
</dbReference>
<dbReference type="GO" id="GO:0004425">
    <property type="term" value="F:indole-3-glycerol-phosphate synthase activity"/>
    <property type="evidence" value="ECO:0007669"/>
    <property type="project" value="UniProtKB-UniRule"/>
</dbReference>
<dbReference type="GO" id="GO:0004640">
    <property type="term" value="F:phosphoribosylanthranilate isomerase activity"/>
    <property type="evidence" value="ECO:0007669"/>
    <property type="project" value="TreeGrafter"/>
</dbReference>
<dbReference type="GO" id="GO:0000162">
    <property type="term" value="P:L-tryptophan biosynthetic process"/>
    <property type="evidence" value="ECO:0007669"/>
    <property type="project" value="UniProtKB-UniRule"/>
</dbReference>
<dbReference type="CDD" id="cd00331">
    <property type="entry name" value="IGPS"/>
    <property type="match status" value="1"/>
</dbReference>
<dbReference type="FunFam" id="3.20.20.70:FF:000024">
    <property type="entry name" value="Indole-3-glycerol phosphate synthase"/>
    <property type="match status" value="1"/>
</dbReference>
<dbReference type="Gene3D" id="3.20.20.70">
    <property type="entry name" value="Aldolase class I"/>
    <property type="match status" value="1"/>
</dbReference>
<dbReference type="HAMAP" id="MF_00134_B">
    <property type="entry name" value="IGPS_B"/>
    <property type="match status" value="1"/>
</dbReference>
<dbReference type="InterPro" id="IPR013785">
    <property type="entry name" value="Aldolase_TIM"/>
</dbReference>
<dbReference type="InterPro" id="IPR045186">
    <property type="entry name" value="Indole-3-glycerol_P_synth"/>
</dbReference>
<dbReference type="InterPro" id="IPR013798">
    <property type="entry name" value="Indole-3-glycerol_P_synth_dom"/>
</dbReference>
<dbReference type="InterPro" id="IPR001468">
    <property type="entry name" value="Indole-3-GlycerolPSynthase_CS"/>
</dbReference>
<dbReference type="InterPro" id="IPR011060">
    <property type="entry name" value="RibuloseP-bd_barrel"/>
</dbReference>
<dbReference type="NCBIfam" id="NF001372">
    <property type="entry name" value="PRK00278.1-4"/>
    <property type="match status" value="1"/>
</dbReference>
<dbReference type="NCBIfam" id="NF001377">
    <property type="entry name" value="PRK00278.2-4"/>
    <property type="match status" value="1"/>
</dbReference>
<dbReference type="PANTHER" id="PTHR22854:SF2">
    <property type="entry name" value="INDOLE-3-GLYCEROL-PHOSPHATE SYNTHASE"/>
    <property type="match status" value="1"/>
</dbReference>
<dbReference type="PANTHER" id="PTHR22854">
    <property type="entry name" value="TRYPTOPHAN BIOSYNTHESIS PROTEIN"/>
    <property type="match status" value="1"/>
</dbReference>
<dbReference type="Pfam" id="PF00218">
    <property type="entry name" value="IGPS"/>
    <property type="match status" value="1"/>
</dbReference>
<dbReference type="SUPFAM" id="SSF51366">
    <property type="entry name" value="Ribulose-phoshate binding barrel"/>
    <property type="match status" value="1"/>
</dbReference>
<dbReference type="PROSITE" id="PS00614">
    <property type="entry name" value="IGPS"/>
    <property type="match status" value="1"/>
</dbReference>
<gene>
    <name evidence="1" type="primary">trpC</name>
    <name type="ordered locus">P9301_14821</name>
</gene>
<feature type="chain" id="PRO_1000018519" description="Indole-3-glycerol phosphate synthase">
    <location>
        <begin position="1"/>
        <end position="295"/>
    </location>
</feature>
<comment type="catalytic activity">
    <reaction evidence="1">
        <text>1-(2-carboxyphenylamino)-1-deoxy-D-ribulose 5-phosphate + H(+) = (1S,2R)-1-C-(indol-3-yl)glycerol 3-phosphate + CO2 + H2O</text>
        <dbReference type="Rhea" id="RHEA:23476"/>
        <dbReference type="ChEBI" id="CHEBI:15377"/>
        <dbReference type="ChEBI" id="CHEBI:15378"/>
        <dbReference type="ChEBI" id="CHEBI:16526"/>
        <dbReference type="ChEBI" id="CHEBI:58613"/>
        <dbReference type="ChEBI" id="CHEBI:58866"/>
        <dbReference type="EC" id="4.1.1.48"/>
    </reaction>
</comment>
<comment type="pathway">
    <text evidence="1">Amino-acid biosynthesis; L-tryptophan biosynthesis; L-tryptophan from chorismate: step 4/5.</text>
</comment>
<comment type="similarity">
    <text evidence="1">Belongs to the TrpC family.</text>
</comment>
<name>TRPC_PROM0</name>
<evidence type="ECO:0000255" key="1">
    <source>
        <dbReference type="HAMAP-Rule" id="MF_00134"/>
    </source>
</evidence>
<reference key="1">
    <citation type="journal article" date="2007" name="PLoS Genet.">
        <title>Patterns and implications of gene gain and loss in the evolution of Prochlorococcus.</title>
        <authorList>
            <person name="Kettler G.C."/>
            <person name="Martiny A.C."/>
            <person name="Huang K."/>
            <person name="Zucker J."/>
            <person name="Coleman M.L."/>
            <person name="Rodrigue S."/>
            <person name="Chen F."/>
            <person name="Lapidus A."/>
            <person name="Ferriera S."/>
            <person name="Johnson J."/>
            <person name="Steglich C."/>
            <person name="Church G.M."/>
            <person name="Richardson P."/>
            <person name="Chisholm S.W."/>
        </authorList>
    </citation>
    <scope>NUCLEOTIDE SEQUENCE [LARGE SCALE GENOMIC DNA]</scope>
    <source>
        <strain>MIT 9301</strain>
    </source>
</reference>
<keyword id="KW-0028">Amino-acid biosynthesis</keyword>
<keyword id="KW-0057">Aromatic amino acid biosynthesis</keyword>
<keyword id="KW-0210">Decarboxylase</keyword>
<keyword id="KW-0456">Lyase</keyword>
<keyword id="KW-1185">Reference proteome</keyword>
<keyword id="KW-0822">Tryptophan biosynthesis</keyword>
<sequence length="295" mass="33626">MEIRRRPPNPTVRVENLEYAVPHREAQAKNILEEIVWHKDIEIKNFKKIVSLEDLIKKIEKLPTPKDFYKNILESKIKPGVIAEIKKASPSKGVIRKDFNPENIAICYEGLGASCISVLTDKRFFQGSYEILETVRRSTNLPLLCKDFIISAYQIYKARVSGADAILLIAAILSDDDLIYLKKIADNLKMSVLVEVHNADELERILKLKSFNLIGINNRDLKTFKTDLKTSIELMHTYADIFLKQNIIPISESGINCAEDLESLRSIGIKGVLIGETFMRETDIEQSFKKLFTSI</sequence>
<organism>
    <name type="scientific">Prochlorococcus marinus (strain MIT 9301)</name>
    <dbReference type="NCBI Taxonomy" id="167546"/>
    <lineage>
        <taxon>Bacteria</taxon>
        <taxon>Bacillati</taxon>
        <taxon>Cyanobacteriota</taxon>
        <taxon>Cyanophyceae</taxon>
        <taxon>Synechococcales</taxon>
        <taxon>Prochlorococcaceae</taxon>
        <taxon>Prochlorococcus</taxon>
    </lineage>
</organism>
<proteinExistence type="inferred from homology"/>
<protein>
    <recommendedName>
        <fullName evidence="1">Indole-3-glycerol phosphate synthase</fullName>
        <shortName evidence="1">IGPS</shortName>
        <ecNumber evidence="1">4.1.1.48</ecNumber>
    </recommendedName>
</protein>